<comment type="function">
    <text evidence="1 3">Actin is a highly conserved protein that polymerizes to produce filaments that form cross-linked networks in the cytoplasm of cells (By similarity). Actin exists in both monomeric (G-actin) and polymeric (F-actin) forms, both forms playing key functions, such as cell motility and contraction (By similarity). Has ATPase activity (By similarity).</text>
</comment>
<comment type="catalytic activity">
    <reaction evidence="3">
        <text>ATP + H2O = ADP + phosphate + H(+)</text>
        <dbReference type="Rhea" id="RHEA:13065"/>
        <dbReference type="ChEBI" id="CHEBI:15377"/>
        <dbReference type="ChEBI" id="CHEBI:15378"/>
        <dbReference type="ChEBI" id="CHEBI:30616"/>
        <dbReference type="ChEBI" id="CHEBI:43474"/>
        <dbReference type="ChEBI" id="CHEBI:456216"/>
    </reaction>
</comment>
<comment type="subcellular location">
    <subcellularLocation>
        <location evidence="1">Cytoplasm</location>
        <location evidence="1">Cytoskeleton</location>
    </subcellularLocation>
</comment>
<comment type="similarity">
    <text evidence="5">Belongs to the actin family.</text>
</comment>
<organism>
    <name type="scientific">Entamoeba histolytica (strain ATCC 30459 / HM-1:IMSS / ABRM)</name>
    <dbReference type="NCBI Taxonomy" id="294381"/>
    <lineage>
        <taxon>Eukaryota</taxon>
        <taxon>Amoebozoa</taxon>
        <taxon>Evosea</taxon>
        <taxon>Archamoebae</taxon>
        <taxon>Mastigamoebida</taxon>
        <taxon>Entamoebidae</taxon>
        <taxon>Entamoeba</taxon>
    </lineage>
</organism>
<proteinExistence type="evidence at transcript level"/>
<keyword id="KW-0067">ATP-binding</keyword>
<keyword id="KW-0963">Cytoplasm</keyword>
<keyword id="KW-0206">Cytoskeleton</keyword>
<keyword id="KW-0378">Hydrolase</keyword>
<keyword id="KW-0547">Nucleotide-binding</keyword>
<keyword id="KW-1185">Reference proteome</keyword>
<protein>
    <recommendedName>
        <fullName evidence="4">Actin</fullName>
        <ecNumber evidence="3">3.6.4.-</ecNumber>
    </recommendedName>
</protein>
<gene>
    <name evidence="6" type="ORF">EHI_107290</name>
</gene>
<evidence type="ECO:0000250" key="1">
    <source>
        <dbReference type="UniProtKB" id="P60709"/>
    </source>
</evidence>
<evidence type="ECO:0000250" key="2">
    <source>
        <dbReference type="UniProtKB" id="Q4Z1L3"/>
    </source>
</evidence>
<evidence type="ECO:0000250" key="3">
    <source>
        <dbReference type="UniProtKB" id="Q8I4X0"/>
    </source>
</evidence>
<evidence type="ECO:0000303" key="4">
    <source>
    </source>
</evidence>
<evidence type="ECO:0000305" key="5"/>
<evidence type="ECO:0000312" key="6">
    <source>
        <dbReference type="EMBL" id="EAL51355.1"/>
    </source>
</evidence>
<name>ACT_ENTH1</name>
<sequence length="376" mass="42030">MGDEEVQALVVDNGSGMCKAGFAGDDAPRAVFPSIVGRPRHVSVMAGMGQKDAYVGDEAQSKRGILTLKYPIEHGIVNNWDDMEKIWHHTFYNELRVAPEEHPVLLTEAPMNPKANREKMTQIMFETFNTPAMYVGIQAVLSLYASGRTTGIVMDSGDGVSHTVPIYEGFSLPHAILRLDLAGRDLTDYLMKILTERGYAFTTTAEREIVRDIKEKLCYVAEDFNEEMQKAASSSELEKSYELPDGQVITVGNERFRCPEALFQPSFLGMECNGIHETTYNSIMKCDVDIRKDLYGNIVLSGGTSMYPGINTRLEKEMIQLAPPTMKIKVIAPPERKYSVWIGGSILASLSTFQNMWITKEEYDESGPAIVHRKCF</sequence>
<reference key="1">
    <citation type="journal article" date="1987" name="Proc. Natl. Acad. Sci. U.S.A.">
        <title>Genomic and cDNA actin sequences from a virulent strain of Entamoeba histolytica.</title>
        <authorList>
            <person name="Edman U."/>
            <person name="Meza I."/>
            <person name="Agabian N."/>
        </authorList>
    </citation>
    <scope>NUCLEOTIDE SEQUENCE [GENOMIC DNA / MRNA]</scope>
    <source>
        <strain>ATCC 30459 / HM-1:IMSS / ABRM</strain>
    </source>
</reference>
<reference key="2">
    <citation type="journal article" date="1987" name="Mol. Biochem. Parasitol.">
        <title>Entamoeba histolytica: cloning and characterization of actin cDNA.</title>
        <authorList>
            <person name="Huber M."/>
            <person name="Garfinkel L."/>
            <person name="Gitler C."/>
            <person name="Mirelman D."/>
            <person name="Revel M."/>
            <person name="Rozenblatt S."/>
        </authorList>
    </citation>
    <scope>NUCLEOTIDE SEQUENCE [MRNA]</scope>
</reference>
<reference evidence="6" key="3">
    <citation type="journal article" date="2005" name="Nature">
        <title>The genome of the protist parasite Entamoeba histolytica.</title>
        <authorList>
            <person name="Loftus B.J."/>
            <person name="Anderson I."/>
            <person name="Davies R."/>
            <person name="Alsmark U.C."/>
            <person name="Samuelson J."/>
            <person name="Amedeo P."/>
            <person name="Roncaglia P."/>
            <person name="Berriman M."/>
            <person name="Hirt R.P."/>
            <person name="Mann B.J."/>
            <person name="Nozaki T."/>
            <person name="Suh B."/>
            <person name="Pop M."/>
            <person name="Duchene M."/>
            <person name="Ackers J."/>
            <person name="Tannich E."/>
            <person name="Leippe M."/>
            <person name="Hofer M."/>
            <person name="Bruchhaus I."/>
            <person name="Willhoeft U."/>
            <person name="Bhattacharya A."/>
            <person name="Chillingworth T."/>
            <person name="Churcher C.M."/>
            <person name="Hance Z."/>
            <person name="Harris B."/>
            <person name="Harris D."/>
            <person name="Jagels K."/>
            <person name="Moule S."/>
            <person name="Mungall K.L."/>
            <person name="Ormond D."/>
            <person name="Squares R."/>
            <person name="Whitehead S."/>
            <person name="Quail M.A."/>
            <person name="Rabbinowitsch E."/>
            <person name="Norbertczak H."/>
            <person name="Price C."/>
            <person name="Wang Z."/>
            <person name="Guillen N."/>
            <person name="Gilchrist C."/>
            <person name="Stroup S.E."/>
            <person name="Bhattacharya S."/>
            <person name="Lohia A."/>
            <person name="Foster P.G."/>
            <person name="Sicheritz-Ponten T."/>
            <person name="Weber C."/>
            <person name="Singh U."/>
            <person name="Mukherjee C."/>
            <person name="El-Sayed N.M.A."/>
            <person name="Petri W.A."/>
            <person name="Clark C.G."/>
            <person name="Embley T.M."/>
            <person name="Barrell B.G."/>
            <person name="Fraser C.M."/>
            <person name="Hall N."/>
        </authorList>
    </citation>
    <scope>NUCLEOTIDE SEQUENCE [LARGE SCALE GENOMIC DNA]</scope>
    <source>
        <strain evidence="6">ATCC 30459 / HM-1:IMSS / ABRM</strain>
    </source>
</reference>
<reference key="4">
    <citation type="submission" date="1993-01" db="EMBL/GenBank/DDBJ databases">
        <authorList>
            <person name="Brachhaus I."/>
            <person name="Loippe M."/>
            <person name="Lioutas C."/>
            <person name="Tannich E."/>
        </authorList>
    </citation>
    <scope>NUCLEOTIDE SEQUENCE [GENOMIC DNA] OF 1-137</scope>
    <source>
        <strain>ATCC 30459 / HM-1:IMSS / ABRM</strain>
    </source>
</reference>
<dbReference type="EC" id="3.6.4.-" evidence="3"/>
<dbReference type="EMBL" id="M16339">
    <property type="protein sequence ID" value="AAA29082.1"/>
    <property type="molecule type" value="Genomic_DNA"/>
</dbReference>
<dbReference type="EMBL" id="M16340">
    <property type="protein sequence ID" value="AAA29083.1"/>
    <property type="molecule type" value="mRNA"/>
</dbReference>
<dbReference type="EMBL" id="M16341">
    <property type="protein sequence ID" value="AAA29084.1"/>
    <property type="molecule type" value="mRNA"/>
</dbReference>
<dbReference type="EMBL" id="M19871">
    <property type="protein sequence ID" value="AAA29086.1"/>
    <property type="molecule type" value="mRNA"/>
</dbReference>
<dbReference type="EMBL" id="DS571205">
    <property type="protein sequence ID" value="EAL51355.1"/>
    <property type="molecule type" value="Genomic_DNA"/>
</dbReference>
<dbReference type="EMBL" id="X70852">
    <property type="protein sequence ID" value="CAA50205.1"/>
    <property type="molecule type" value="Genomic_DNA"/>
</dbReference>
<dbReference type="PIR" id="A29877">
    <property type="entry name" value="ATAXE"/>
</dbReference>
<dbReference type="RefSeq" id="XP_001913457.1">
    <property type="nucleotide sequence ID" value="XM_001913422.1"/>
</dbReference>
<dbReference type="RefSeq" id="XP_001913786.1">
    <property type="nucleotide sequence ID" value="XM_001913751.1"/>
</dbReference>
<dbReference type="RefSeq" id="XP_648054.1">
    <property type="nucleotide sequence ID" value="XM_642962.2"/>
</dbReference>
<dbReference type="RefSeq" id="XP_648828.1">
    <property type="nucleotide sequence ID" value="XM_643736.2"/>
</dbReference>
<dbReference type="RefSeq" id="XP_655156.1">
    <property type="nucleotide sequence ID" value="XM_650064.2"/>
</dbReference>
<dbReference type="RefSeq" id="XP_655490.1">
    <property type="nucleotide sequence ID" value="XM_650398.2"/>
</dbReference>
<dbReference type="RefSeq" id="XP_656738.1">
    <property type="nucleotide sequence ID" value="XM_651646.2"/>
</dbReference>
<dbReference type="SMR" id="P11426"/>
<dbReference type="GeneID" id="3411095"/>
<dbReference type="KEGG" id="ehi:EHI_107290"/>
<dbReference type="KEGG" id="ehi:EHI_126190"/>
<dbReference type="KEGG" id="ehi:EHI_140120"/>
<dbReference type="KEGG" id="ehi:EHI_142730"/>
<dbReference type="KEGG" id="ehi:EHI_159150"/>
<dbReference type="KEGG" id="ehi:EHI_163750"/>
<dbReference type="KEGG" id="ehi:EHI_182900"/>
<dbReference type="VEuPathDB" id="AmoebaDB:EHI5A_072340"/>
<dbReference type="VEuPathDB" id="AmoebaDB:EHI7A_173380"/>
<dbReference type="VEuPathDB" id="AmoebaDB:EHI8A_198160"/>
<dbReference type="VEuPathDB" id="AmoebaDB:EHI_107290"/>
<dbReference type="VEuPathDB" id="AmoebaDB:KM1_268200"/>
<dbReference type="eggNOG" id="KOG0676">
    <property type="taxonomic scope" value="Eukaryota"/>
</dbReference>
<dbReference type="HOGENOM" id="CLU_027965_0_2_1"/>
<dbReference type="OMA" id="PXEREIV"/>
<dbReference type="OrthoDB" id="27221at2759"/>
<dbReference type="Proteomes" id="UP000001926">
    <property type="component" value="Partially assembled WGS sequence"/>
</dbReference>
<dbReference type="GO" id="GO:0015629">
    <property type="term" value="C:actin cytoskeleton"/>
    <property type="evidence" value="ECO:0000318"/>
    <property type="project" value="GO_Central"/>
</dbReference>
<dbReference type="GO" id="GO:0005737">
    <property type="term" value="C:cytoplasm"/>
    <property type="evidence" value="ECO:0007669"/>
    <property type="project" value="UniProtKB-KW"/>
</dbReference>
<dbReference type="GO" id="GO:0005524">
    <property type="term" value="F:ATP binding"/>
    <property type="evidence" value="ECO:0007669"/>
    <property type="project" value="UniProtKB-KW"/>
</dbReference>
<dbReference type="GO" id="GO:0016787">
    <property type="term" value="F:hydrolase activity"/>
    <property type="evidence" value="ECO:0007669"/>
    <property type="project" value="UniProtKB-KW"/>
</dbReference>
<dbReference type="GO" id="GO:0006909">
    <property type="term" value="P:phagocytosis"/>
    <property type="evidence" value="ECO:0007669"/>
    <property type="project" value="UniProtKB-ARBA"/>
</dbReference>
<dbReference type="CDD" id="cd10224">
    <property type="entry name" value="ASKHA_NBD_actin"/>
    <property type="match status" value="1"/>
</dbReference>
<dbReference type="FunFam" id="3.30.420.40:FF:000218">
    <property type="entry name" value="actin, alpha sarcomeric/skeletal-like"/>
    <property type="match status" value="1"/>
</dbReference>
<dbReference type="FunFam" id="2.30.36.70:FF:000001">
    <property type="entry name" value="Actin, alpha skeletal muscle"/>
    <property type="match status" value="1"/>
</dbReference>
<dbReference type="FunFam" id="3.30.420.40:FF:000291">
    <property type="entry name" value="Actin, alpha skeletal muscle"/>
    <property type="match status" value="1"/>
</dbReference>
<dbReference type="FunFam" id="3.90.640.10:FF:000047">
    <property type="entry name" value="Actin, alpha skeletal muscle"/>
    <property type="match status" value="1"/>
</dbReference>
<dbReference type="FunFam" id="3.30.420.40:FF:000058">
    <property type="entry name" value="Putative actin-related protein 5"/>
    <property type="match status" value="1"/>
</dbReference>
<dbReference type="Gene3D" id="3.30.420.40">
    <property type="match status" value="2"/>
</dbReference>
<dbReference type="Gene3D" id="3.90.640.10">
    <property type="entry name" value="Actin, Chain A, domain 4"/>
    <property type="match status" value="1"/>
</dbReference>
<dbReference type="InterPro" id="IPR004000">
    <property type="entry name" value="Actin"/>
</dbReference>
<dbReference type="InterPro" id="IPR020902">
    <property type="entry name" value="Actin/actin-like_CS"/>
</dbReference>
<dbReference type="InterPro" id="IPR004001">
    <property type="entry name" value="Actin_CS"/>
</dbReference>
<dbReference type="InterPro" id="IPR043129">
    <property type="entry name" value="ATPase_NBD"/>
</dbReference>
<dbReference type="PANTHER" id="PTHR11937">
    <property type="entry name" value="ACTIN"/>
    <property type="match status" value="1"/>
</dbReference>
<dbReference type="Pfam" id="PF00022">
    <property type="entry name" value="Actin"/>
    <property type="match status" value="1"/>
</dbReference>
<dbReference type="PRINTS" id="PR00190">
    <property type="entry name" value="ACTIN"/>
</dbReference>
<dbReference type="SMART" id="SM00268">
    <property type="entry name" value="ACTIN"/>
    <property type="match status" value="1"/>
</dbReference>
<dbReference type="SUPFAM" id="SSF53067">
    <property type="entry name" value="Actin-like ATPase domain"/>
    <property type="match status" value="2"/>
</dbReference>
<dbReference type="PROSITE" id="PS00406">
    <property type="entry name" value="ACTINS_1"/>
    <property type="match status" value="1"/>
</dbReference>
<dbReference type="PROSITE" id="PS00432">
    <property type="entry name" value="ACTINS_2"/>
    <property type="match status" value="1"/>
</dbReference>
<dbReference type="PROSITE" id="PS01132">
    <property type="entry name" value="ACTINS_ACT_LIKE"/>
    <property type="match status" value="1"/>
</dbReference>
<accession>P11426</accession>
<feature type="chain" id="PRO_0000088938" description="Actin">
    <location>
        <begin position="1"/>
        <end position="376"/>
    </location>
</feature>
<feature type="region of interest" description="DNAseI-binding D loop; regulates polymerization and stability of the actin filament" evidence="2">
    <location>
        <begin position="40"/>
        <end position="61"/>
    </location>
</feature>
<feature type="binding site" evidence="3">
    <location>
        <position position="15"/>
    </location>
    <ligand>
        <name>ATP</name>
        <dbReference type="ChEBI" id="CHEBI:30616"/>
    </ligand>
</feature>
<feature type="binding site" evidence="3">
    <location>
        <position position="16"/>
    </location>
    <ligand>
        <name>ATP</name>
        <dbReference type="ChEBI" id="CHEBI:30616"/>
    </ligand>
</feature>
<feature type="binding site" evidence="3">
    <location>
        <position position="19"/>
    </location>
    <ligand>
        <name>ATP</name>
        <dbReference type="ChEBI" id="CHEBI:30616"/>
    </ligand>
</feature>
<feature type="binding site" evidence="3">
    <location>
        <position position="158"/>
    </location>
    <ligand>
        <name>ATP</name>
        <dbReference type="ChEBI" id="CHEBI:30616"/>
    </ligand>
</feature>
<feature type="binding site" evidence="3">
    <location>
        <position position="159"/>
    </location>
    <ligand>
        <name>ATP</name>
        <dbReference type="ChEBI" id="CHEBI:30616"/>
    </ligand>
</feature>
<feature type="binding site" evidence="3">
    <location>
        <position position="160"/>
    </location>
    <ligand>
        <name>ATP</name>
        <dbReference type="ChEBI" id="CHEBI:30616"/>
    </ligand>
</feature>
<feature type="binding site" evidence="3">
    <location>
        <position position="214"/>
    </location>
    <ligand>
        <name>ATP</name>
        <dbReference type="ChEBI" id="CHEBI:30616"/>
    </ligand>
</feature>
<feature type="binding site" evidence="3">
    <location>
        <position position="215"/>
    </location>
    <ligand>
        <name>ATP</name>
        <dbReference type="ChEBI" id="CHEBI:30616"/>
    </ligand>
</feature>
<feature type="binding site" evidence="3">
    <location>
        <position position="303"/>
    </location>
    <ligand>
        <name>ATP</name>
        <dbReference type="ChEBI" id="CHEBI:30616"/>
    </ligand>
</feature>